<protein>
    <recommendedName>
        <fullName>Discoidin domain-containing receptor 2</fullName>
        <shortName>Discoidin domain receptor 2</shortName>
        <ecNumber>2.7.10.1</ecNumber>
    </recommendedName>
    <alternativeName>
        <fullName>CD167 antigen-like family member B</fullName>
    </alternativeName>
    <alternativeName>
        <fullName>Neurotrophic tyrosine kinase, receptor-related 3</fullName>
    </alternativeName>
    <alternativeName>
        <fullName>Receptor protein-tyrosine kinase TKT</fullName>
    </alternativeName>
    <alternativeName>
        <fullName>Tyrosine-protein kinase TYRO10</fullName>
    </alternativeName>
    <cdAntigenName>CD167b</cdAntigenName>
</protein>
<gene>
    <name type="primary">Ddr2</name>
    <name type="synonym">Ntrkr3</name>
    <name type="synonym">Tkt</name>
    <name type="synonym">Tyro10</name>
</gene>
<proteinExistence type="evidence at protein level"/>
<reference key="1">
    <citation type="journal article" date="1993" name="Oncogene">
        <title>Structure, expression and chromosomal mapping of TKT from man and mouse: a new subclass of receptor tyrosine kinases with a factor VIII-like domain.</title>
        <authorList>
            <person name="Karn T."/>
            <person name="Holtrich U."/>
            <person name="Braeuninger A."/>
            <person name="Boehme B."/>
            <person name="Wolf G."/>
            <person name="Ruebsamen-Waigmann H."/>
            <person name="Strebhardt K."/>
        </authorList>
    </citation>
    <scope>NUCLEOTIDE SEQUENCE [MRNA]</scope>
</reference>
<reference key="2">
    <citation type="journal article" date="1994" name="Oncogene">
        <title>Structure and expression of the Tyro 10 receptor tyrosine kinase.</title>
        <authorList>
            <person name="Lai C."/>
            <person name="Lemke G.E."/>
        </authorList>
    </citation>
    <scope>NUCLEOTIDE SEQUENCE [MRNA]</scope>
    <source>
        <strain>C57BL/6J</strain>
        <tissue>Brain</tissue>
    </source>
</reference>
<reference key="3">
    <citation type="journal article" date="2004" name="Genome Res.">
        <title>The status, quality, and expansion of the NIH full-length cDNA project: the Mammalian Gene Collection (MGC).</title>
        <authorList>
            <consortium name="The MGC Project Team"/>
        </authorList>
    </citation>
    <scope>NUCLEOTIDE SEQUENCE [LARGE SCALE MRNA]</scope>
    <source>
        <tissue>Embryo</tissue>
    </source>
</reference>
<reference key="4">
    <citation type="journal article" date="2001" name="EMBO Rep.">
        <title>The collagen receptor DDR2 regulates proliferation and its elimination leads to dwarfism.</title>
        <authorList>
            <person name="Labrador J.P."/>
            <person name="Azcoitia V."/>
            <person name="Tuckermann J."/>
            <person name="Lin C."/>
            <person name="Olaso E."/>
            <person name="Manes S."/>
            <person name="Bruckner K."/>
            <person name="Goergen J.L."/>
            <person name="Lemke G."/>
            <person name="Yancopoulos G."/>
            <person name="Angel P."/>
            <person name="Martinez C."/>
            <person name="Klein R."/>
        </authorList>
    </citation>
    <scope>DISRUPTION PHENOTYPE</scope>
    <scope>FUNCTION</scope>
    <scope>TISSUE SPECIFICITY</scope>
</reference>
<reference key="5">
    <citation type="journal article" date="2002" name="J. Biol. Chem.">
        <title>Discoidin domain receptor 2 regulates fibroblast proliferation and migration through the extracellular matrix in association with transcriptional activation of matrix metalloproteinase-2.</title>
        <authorList>
            <person name="Olaso E."/>
            <person name="Labrador J.-P."/>
            <person name="Wang L."/>
            <person name="Ikeda K."/>
            <person name="Eng F.J."/>
            <person name="Klein R."/>
            <person name="Lovett D.H."/>
            <person name="Lin H.C."/>
            <person name="Friedman S.L."/>
        </authorList>
    </citation>
    <scope>FUNCTION</scope>
</reference>
<reference key="6">
    <citation type="journal article" date="2002" name="J. Biol. Chem.">
        <title>Discoidin domain receptor 2 interacts with Src and Shc following its activation by type I collagen.</title>
        <authorList>
            <person name="Ikeda K."/>
            <person name="Wang L.H."/>
            <person name="Torres R."/>
            <person name="Zhao H."/>
            <person name="Olaso E."/>
            <person name="Eng F.J."/>
            <person name="Labrador P."/>
            <person name="Klein R."/>
            <person name="Lovett D."/>
            <person name="Yancopoulos G.D."/>
            <person name="Friedman S.L."/>
            <person name="Lin H.C."/>
        </authorList>
    </citation>
    <scope>FUNCTION</scope>
    <scope>INTERACTION WITH SRC AND SHC1</scope>
    <scope>MUTAGENESIS OF TYR-471 AND LYS-608</scope>
    <scope>PHOSPHORYLATION AT TYR-471</scope>
</reference>
<reference key="7">
    <citation type="journal article" date="2005" name="J. Biol. Chem.">
        <title>Activation of the discoidin domain receptor 2 induces expression of matrix metalloproteinase 13 associated with osteoarthritis in mice.</title>
        <authorList>
            <person name="Xu L."/>
            <person name="Peng H."/>
            <person name="Wu D."/>
            <person name="Hu K."/>
            <person name="Goldring M.B."/>
            <person name="Olsen B.R."/>
            <person name="Li Y."/>
        </authorList>
    </citation>
    <scope>FUNCTION IN UP-REGULATION OF MMP13</scope>
</reference>
<reference key="8">
    <citation type="journal article" date="2008" name="Mol. Endocrinol.">
        <title>A novel dwarfism with gonadal dysfunction due to loss-of-function allele of the collagen receptor gene, Ddr2, in the mouse.</title>
        <authorList>
            <person name="Kano K."/>
            <person name="Marin de Evsikova C."/>
            <person name="Young J."/>
            <person name="Wnek C."/>
            <person name="Maddatu T.P."/>
            <person name="Nishina P.M."/>
            <person name="Naggert J.K."/>
        </authorList>
    </citation>
    <scope>INVOLVEMENT IN SLI</scope>
    <scope>TISSUE SPECIFICITY</scope>
</reference>
<reference key="9">
    <citation type="journal article" date="2010" name="Mol. Reprod. Dev.">
        <title>Discoidin domain receptor 2 (DDR2) is required for maintenance of spermatogenesis in male mice.</title>
        <authorList>
            <person name="Kano K."/>
            <person name="Kitamura A."/>
            <person name="Matsuwaki T."/>
            <person name="Morimatsu M."/>
            <person name="Naito K."/>
        </authorList>
    </citation>
    <scope>INVOLVEMENT IN SLI</scope>
    <scope>FUNCTION</scope>
    <scope>TISSUE SPECIFICITY</scope>
</reference>
<keyword id="KW-0067">ATP-binding</keyword>
<keyword id="KW-1003">Cell membrane</keyword>
<keyword id="KW-1015">Disulfide bond</keyword>
<keyword id="KW-0325">Glycoprotein</keyword>
<keyword id="KW-0418">Kinase</keyword>
<keyword id="KW-0472">Membrane</keyword>
<keyword id="KW-0547">Nucleotide-binding</keyword>
<keyword id="KW-0892">Osteogenesis</keyword>
<keyword id="KW-0597">Phosphoprotein</keyword>
<keyword id="KW-0675">Receptor</keyword>
<keyword id="KW-1185">Reference proteome</keyword>
<keyword id="KW-0732">Signal</keyword>
<keyword id="KW-0808">Transferase</keyword>
<keyword id="KW-0812">Transmembrane</keyword>
<keyword id="KW-1133">Transmembrane helix</keyword>
<keyword id="KW-0829">Tyrosine-protein kinase</keyword>
<name>DDR2_MOUSE</name>
<feature type="signal peptide" evidence="3">
    <location>
        <begin position="1"/>
        <end position="21"/>
    </location>
</feature>
<feature type="chain" id="PRO_0000016747" description="Discoidin domain-containing receptor 2">
    <location>
        <begin position="22"/>
        <end position="854"/>
    </location>
</feature>
<feature type="topological domain" description="Extracellular" evidence="3">
    <location>
        <begin position="22"/>
        <end position="399"/>
    </location>
</feature>
<feature type="transmembrane region" description="Helical" evidence="3">
    <location>
        <begin position="400"/>
        <end position="421"/>
    </location>
</feature>
<feature type="topological domain" description="Cytoplasmic" evidence="3">
    <location>
        <begin position="422"/>
        <end position="854"/>
    </location>
</feature>
<feature type="domain" description="F5/8 type C" evidence="4">
    <location>
        <begin position="30"/>
        <end position="185"/>
    </location>
</feature>
<feature type="domain" description="Protein kinase" evidence="5">
    <location>
        <begin position="563"/>
        <end position="848"/>
    </location>
</feature>
<feature type="region of interest" description="Disordered" evidence="7">
    <location>
        <begin position="452"/>
        <end position="471"/>
    </location>
</feature>
<feature type="compositionally biased region" description="Low complexity" evidence="7">
    <location>
        <begin position="455"/>
        <end position="469"/>
    </location>
</feature>
<feature type="active site" description="Proton acceptor" evidence="5 6">
    <location>
        <position position="709"/>
    </location>
</feature>
<feature type="binding site" evidence="5">
    <location>
        <begin position="569"/>
        <end position="577"/>
    </location>
    <ligand>
        <name>ATP</name>
        <dbReference type="ChEBI" id="CHEBI:30616"/>
    </ligand>
</feature>
<feature type="binding site" evidence="5">
    <location>
        <position position="608"/>
    </location>
    <ligand>
        <name>ATP</name>
        <dbReference type="ChEBI" id="CHEBI:30616"/>
    </ligand>
</feature>
<feature type="modified residue" description="Phosphotyrosine; by SRC and autocatalysis" evidence="10">
    <location>
        <position position="471"/>
    </location>
</feature>
<feature type="modified residue" description="Phosphotyrosine; by SRC and autocatalysis" evidence="2">
    <location>
        <position position="735"/>
    </location>
</feature>
<feature type="modified residue" description="Phosphotyrosine; by SRC and autocatalysis" evidence="2">
    <location>
        <position position="739"/>
    </location>
</feature>
<feature type="modified residue" description="Phosphotyrosine; by SRC and autocatalysis" evidence="2">
    <location>
        <position position="740"/>
    </location>
</feature>
<feature type="glycosylation site" description="N-linked (GlcNAc...) asparagine" evidence="3">
    <location>
        <position position="121"/>
    </location>
</feature>
<feature type="glycosylation site" description="N-linked (GlcNAc...) asparagine" evidence="3">
    <location>
        <position position="213"/>
    </location>
</feature>
<feature type="glycosylation site" description="N-linked (GlcNAc...) asparagine" evidence="3">
    <location>
        <position position="261"/>
    </location>
</feature>
<feature type="glycosylation site" description="N-linked (GlcNAc...) asparagine" evidence="3">
    <location>
        <position position="280"/>
    </location>
</feature>
<feature type="glycosylation site" description="N-linked (GlcNAc...) asparagine" evidence="3">
    <location>
        <position position="372"/>
    </location>
</feature>
<feature type="disulfide bond" evidence="4">
    <location>
        <begin position="30"/>
        <end position="185"/>
    </location>
</feature>
<feature type="disulfide bond" evidence="4">
    <location>
        <begin position="73"/>
        <end position="177"/>
    </location>
</feature>
<feature type="mutagenesis site" description="Reduces tyrosine phosphorylation by 90%; when associated with E-608." evidence="10">
    <original>Y</original>
    <variation>F</variation>
    <location>
        <position position="471"/>
    </location>
</feature>
<feature type="mutagenesis site" description="Abolishes kinase activity. Reduces tyrosine phosphorylation by 90%; when associated with F-471." evidence="10">
    <original>K</original>
    <variation>E</variation>
    <location>
        <position position="608"/>
    </location>
</feature>
<accession>Q62371</accession>
<accession>B2RSD7</accession>
<sequence length="854" mass="96482">MIPIPRMPLVLLLLLLILGSAKAQVNPAICRYPLGMSGGHIPDEDITASSQWSESTAAKYGRLDSEEGDGAWCPEIPVQPDDLKEFLQIDLRTLHFITLVGTQGRHAGGHGIEFAPMYKINYSRDGSRWISWRNRHGKQVLDGNSNPYDVFLKDLEPPIVARFVRLIPVTDHSMNVCMRVELYGCVWLDGLVSYNAPAGQQFVLPGGSIIYLNDSVYDGAVGYSMTEGLGQLTDGVSGLDDFTQTHEYHVWPGYDYVGWRNESATNGFIEIMFEFDRIRNFTTMKVHCNNMFAKGVKIFKEVQCYFRSEASEWEPTAVYFPLVLDDVNPSARFVTVPLHHRMASAIKCQYHFADTWMMFSEITFQSDAAMYNNSGALPTSPMAPTTYDPMLKVDDSNTRILIGCLVAIIFILLAIIVIILWRQFWQKMLEKASRRMLDDEMTVSLSLPSESSMFNNNRSSSPSEQESNSTYDRIFPLRPDYQEPSRLIRKLPEFAPGEEESGCSGVVKPAQPNGPEGVPHYAEADIVNLQGVTGGNTYCVPAVTMDLLSGKDVAVEEFPRKLLAFKEKLGEGQFGEVHLCEVEGMEKFKDKDFALDVSANQPVLVAVKMLRADANKNARNDFLKEIKIMSRLKDPNIIRLLAVCITEDPLCMITEYMENGDLNQFLSRHEPLSSCSSDATVSYANLKFMATQIASGMKYLSSLNFVHRDLATRNCLVGKNYTIKIADFGMSRNLYSGDYYRIQGRAVLPIRWMSWESILLGKFTTASDVWAFGVTLWETFTFCQEQPYSQLSDEQVIENTGEFFRDQGRQIYLPQPALCPDSVYKLMLSCWRRETKHRPSFQEIHLLLLQQGAE</sequence>
<evidence type="ECO:0000250" key="1"/>
<evidence type="ECO:0000250" key="2">
    <source>
        <dbReference type="UniProtKB" id="Q16832"/>
    </source>
</evidence>
<evidence type="ECO:0000255" key="3"/>
<evidence type="ECO:0000255" key="4">
    <source>
        <dbReference type="PROSITE-ProRule" id="PRU00081"/>
    </source>
</evidence>
<evidence type="ECO:0000255" key="5">
    <source>
        <dbReference type="PROSITE-ProRule" id="PRU00159"/>
    </source>
</evidence>
<evidence type="ECO:0000255" key="6">
    <source>
        <dbReference type="PROSITE-ProRule" id="PRU10028"/>
    </source>
</evidence>
<evidence type="ECO:0000256" key="7">
    <source>
        <dbReference type="SAM" id="MobiDB-lite"/>
    </source>
</evidence>
<evidence type="ECO:0000269" key="8">
    <source>
    </source>
</evidence>
<evidence type="ECO:0000269" key="9">
    <source>
    </source>
</evidence>
<evidence type="ECO:0000269" key="10">
    <source>
    </source>
</evidence>
<evidence type="ECO:0000269" key="11">
    <source>
    </source>
</evidence>
<evidence type="ECO:0000269" key="12">
    <source>
    </source>
</evidence>
<evidence type="ECO:0000269" key="13">
    <source>
    </source>
</evidence>
<evidence type="ECO:0000305" key="14"/>
<evidence type="ECO:0000305" key="15">
    <source>
    </source>
</evidence>
<evidence type="ECO:0000305" key="16">
    <source>
    </source>
</evidence>
<organism>
    <name type="scientific">Mus musculus</name>
    <name type="common">Mouse</name>
    <dbReference type="NCBI Taxonomy" id="10090"/>
    <lineage>
        <taxon>Eukaryota</taxon>
        <taxon>Metazoa</taxon>
        <taxon>Chordata</taxon>
        <taxon>Craniata</taxon>
        <taxon>Vertebrata</taxon>
        <taxon>Euteleostomi</taxon>
        <taxon>Mammalia</taxon>
        <taxon>Eutheria</taxon>
        <taxon>Euarchontoglires</taxon>
        <taxon>Glires</taxon>
        <taxon>Rodentia</taxon>
        <taxon>Myomorpha</taxon>
        <taxon>Muroidea</taxon>
        <taxon>Muridae</taxon>
        <taxon>Murinae</taxon>
        <taxon>Mus</taxon>
        <taxon>Mus</taxon>
    </lineage>
</organism>
<dbReference type="EC" id="2.7.10.1"/>
<dbReference type="EMBL" id="X76505">
    <property type="protein sequence ID" value="CAA54040.1"/>
    <property type="status" value="ALT_INIT"/>
    <property type="molecule type" value="mRNA"/>
</dbReference>
<dbReference type="EMBL" id="BC138826">
    <property type="protein sequence ID" value="AAI38827.1"/>
    <property type="molecule type" value="mRNA"/>
</dbReference>
<dbReference type="EMBL" id="BC138827">
    <property type="protein sequence ID" value="AAI38828.1"/>
    <property type="molecule type" value="mRNA"/>
</dbReference>
<dbReference type="CCDS" id="CCDS48436.1"/>
<dbReference type="PIR" id="I48859">
    <property type="entry name" value="I48859"/>
</dbReference>
<dbReference type="RefSeq" id="NP_072075.2">
    <property type="nucleotide sequence ID" value="NM_022563.2"/>
</dbReference>
<dbReference type="RefSeq" id="XP_006496759.1">
    <property type="nucleotide sequence ID" value="XM_006496696.5"/>
</dbReference>
<dbReference type="RefSeq" id="XP_006496760.1">
    <property type="nucleotide sequence ID" value="XM_006496697.5"/>
</dbReference>
<dbReference type="RefSeq" id="XP_006496761.1">
    <property type="nucleotide sequence ID" value="XM_006496698.4"/>
</dbReference>
<dbReference type="SMR" id="Q62371"/>
<dbReference type="BioGRID" id="201871">
    <property type="interactions" value="2"/>
</dbReference>
<dbReference type="FunCoup" id="Q62371">
    <property type="interactions" value="45"/>
</dbReference>
<dbReference type="STRING" id="10090.ENSMUSP00000141443"/>
<dbReference type="GlyCosmos" id="Q62371">
    <property type="glycosylation" value="5 sites, No reported glycans"/>
</dbReference>
<dbReference type="GlyGen" id="Q62371">
    <property type="glycosylation" value="5 sites"/>
</dbReference>
<dbReference type="iPTMnet" id="Q62371"/>
<dbReference type="PhosphoSitePlus" id="Q62371"/>
<dbReference type="SwissPalm" id="Q62371"/>
<dbReference type="jPOST" id="Q62371"/>
<dbReference type="PaxDb" id="10090-ENSMUSP00000129624"/>
<dbReference type="PeptideAtlas" id="Q62371"/>
<dbReference type="ProteomicsDB" id="277968"/>
<dbReference type="Pumba" id="Q62371"/>
<dbReference type="Antibodypedia" id="4177">
    <property type="antibodies" value="443 antibodies from 36 providers"/>
</dbReference>
<dbReference type="DNASU" id="18214"/>
<dbReference type="Ensembl" id="ENSMUST00000027985.8">
    <property type="protein sequence ID" value="ENSMUSP00000027985.3"/>
    <property type="gene ID" value="ENSMUSG00000026674.10"/>
</dbReference>
<dbReference type="Ensembl" id="ENSMUST00000170800.8">
    <property type="protein sequence ID" value="ENSMUSP00000129624.2"/>
    <property type="gene ID" value="ENSMUSG00000026674.10"/>
</dbReference>
<dbReference type="Ensembl" id="ENSMUST00000194690.6">
    <property type="protein sequence ID" value="ENSMUSP00000141443.2"/>
    <property type="gene ID" value="ENSMUSG00000026674.10"/>
</dbReference>
<dbReference type="GeneID" id="18214"/>
<dbReference type="KEGG" id="mmu:18214"/>
<dbReference type="UCSC" id="uc007dlu.2">
    <property type="organism name" value="mouse"/>
</dbReference>
<dbReference type="AGR" id="MGI:1345277"/>
<dbReference type="CTD" id="4921"/>
<dbReference type="MGI" id="MGI:1345277">
    <property type="gene designation" value="Ddr2"/>
</dbReference>
<dbReference type="VEuPathDB" id="HostDB:ENSMUSG00000026674"/>
<dbReference type="eggNOG" id="KOG1094">
    <property type="taxonomic scope" value="Eukaryota"/>
</dbReference>
<dbReference type="GeneTree" id="ENSGT00940000154842"/>
<dbReference type="HOGENOM" id="CLU_008873_2_0_1"/>
<dbReference type="InParanoid" id="Q62371"/>
<dbReference type="OMA" id="KWLRWKN"/>
<dbReference type="OrthoDB" id="6071166at2759"/>
<dbReference type="PhylomeDB" id="Q62371"/>
<dbReference type="TreeFam" id="TF317840"/>
<dbReference type="BRENDA" id="2.7.10.1">
    <property type="organism ID" value="3474"/>
</dbReference>
<dbReference type="Reactome" id="R-MMU-3000171">
    <property type="pathway name" value="Non-integrin membrane-ECM interactions"/>
</dbReference>
<dbReference type="BioGRID-ORCS" id="18214">
    <property type="hits" value="2 hits in 80 CRISPR screens"/>
</dbReference>
<dbReference type="ChiTaRS" id="Ddr2">
    <property type="organism name" value="mouse"/>
</dbReference>
<dbReference type="PRO" id="PR:Q62371"/>
<dbReference type="Proteomes" id="UP000000589">
    <property type="component" value="Chromosome 1"/>
</dbReference>
<dbReference type="RNAct" id="Q62371">
    <property type="molecule type" value="protein"/>
</dbReference>
<dbReference type="Bgee" id="ENSMUSG00000026674">
    <property type="expression patterns" value="Expressed in vault of skull and 239 other cell types or tissues"/>
</dbReference>
<dbReference type="ExpressionAtlas" id="Q62371">
    <property type="expression patterns" value="baseline and differential"/>
</dbReference>
<dbReference type="GO" id="GO:0015629">
    <property type="term" value="C:actin cytoskeleton"/>
    <property type="evidence" value="ECO:0007669"/>
    <property type="project" value="Ensembl"/>
</dbReference>
<dbReference type="GO" id="GO:0016324">
    <property type="term" value="C:apical plasma membrane"/>
    <property type="evidence" value="ECO:0007669"/>
    <property type="project" value="Ensembl"/>
</dbReference>
<dbReference type="GO" id="GO:0005524">
    <property type="term" value="F:ATP binding"/>
    <property type="evidence" value="ECO:0007669"/>
    <property type="project" value="UniProtKB-KW"/>
</dbReference>
<dbReference type="GO" id="GO:0005518">
    <property type="term" value="F:collagen binding"/>
    <property type="evidence" value="ECO:0000314"/>
    <property type="project" value="MGI"/>
</dbReference>
<dbReference type="GO" id="GO:0038062">
    <property type="term" value="F:protein tyrosine kinase collagen receptor activity"/>
    <property type="evidence" value="ECO:0000314"/>
    <property type="project" value="UniProtKB"/>
</dbReference>
<dbReference type="GO" id="GO:0004714">
    <property type="term" value="F:transmembrane receptor protein tyrosine kinase activity"/>
    <property type="evidence" value="ECO:0000250"/>
    <property type="project" value="UniProtKB"/>
</dbReference>
<dbReference type="GO" id="GO:0031214">
    <property type="term" value="P:biomineral tissue development"/>
    <property type="evidence" value="ECO:0000315"/>
    <property type="project" value="UniProtKB"/>
</dbReference>
<dbReference type="GO" id="GO:0007169">
    <property type="term" value="P:cell surface receptor protein tyrosine kinase signaling pathway"/>
    <property type="evidence" value="ECO:0000314"/>
    <property type="project" value="MGI"/>
</dbReference>
<dbReference type="GO" id="GO:1904385">
    <property type="term" value="P:cellular response to angiotensin"/>
    <property type="evidence" value="ECO:0007669"/>
    <property type="project" value="Ensembl"/>
</dbReference>
<dbReference type="GO" id="GO:0071456">
    <property type="term" value="P:cellular response to hypoxia"/>
    <property type="evidence" value="ECO:0007669"/>
    <property type="project" value="Ensembl"/>
</dbReference>
<dbReference type="GO" id="GO:0071560">
    <property type="term" value="P:cellular response to transforming growth factor beta stimulus"/>
    <property type="evidence" value="ECO:0007669"/>
    <property type="project" value="Ensembl"/>
</dbReference>
<dbReference type="GO" id="GO:0035988">
    <property type="term" value="P:chondrocyte proliferation"/>
    <property type="evidence" value="ECO:0000315"/>
    <property type="project" value="UniProtKB"/>
</dbReference>
<dbReference type="GO" id="GO:0030199">
    <property type="term" value="P:collagen fibril organization"/>
    <property type="evidence" value="ECO:0000315"/>
    <property type="project" value="UniProtKB"/>
</dbReference>
<dbReference type="GO" id="GO:0038063">
    <property type="term" value="P:collagen-activated tyrosine kinase receptor signaling pathway"/>
    <property type="evidence" value="ECO:0000314"/>
    <property type="project" value="UniProtKB"/>
</dbReference>
<dbReference type="GO" id="GO:0003416">
    <property type="term" value="P:endochondral bone growth"/>
    <property type="evidence" value="ECO:0000315"/>
    <property type="project" value="UniProtKB"/>
</dbReference>
<dbReference type="GO" id="GO:0043066">
    <property type="term" value="P:negative regulation of apoptotic process"/>
    <property type="evidence" value="ECO:0007669"/>
    <property type="project" value="Ensembl"/>
</dbReference>
<dbReference type="GO" id="GO:1901299">
    <property type="term" value="P:negative regulation of hydrogen peroxide-mediated programmed cell death"/>
    <property type="evidence" value="ECO:0007669"/>
    <property type="project" value="Ensembl"/>
</dbReference>
<dbReference type="GO" id="GO:0001503">
    <property type="term" value="P:ossification"/>
    <property type="evidence" value="ECO:0007669"/>
    <property type="project" value="UniProtKB-KW"/>
</dbReference>
<dbReference type="GO" id="GO:0018108">
    <property type="term" value="P:peptidyl-tyrosine phosphorylation"/>
    <property type="evidence" value="ECO:0000250"/>
    <property type="project" value="UniProtKB"/>
</dbReference>
<dbReference type="GO" id="GO:0008284">
    <property type="term" value="P:positive regulation of cell population proliferation"/>
    <property type="evidence" value="ECO:0000315"/>
    <property type="project" value="MGI"/>
</dbReference>
<dbReference type="GO" id="GO:0032967">
    <property type="term" value="P:positive regulation of collagen biosynthetic process"/>
    <property type="evidence" value="ECO:0007669"/>
    <property type="project" value="Ensembl"/>
</dbReference>
<dbReference type="GO" id="GO:0051091">
    <property type="term" value="P:positive regulation of DNA-binding transcription factor activity"/>
    <property type="evidence" value="ECO:0000250"/>
    <property type="project" value="UniProtKB"/>
</dbReference>
<dbReference type="GO" id="GO:0070374">
    <property type="term" value="P:positive regulation of ERK1 and ERK2 cascade"/>
    <property type="evidence" value="ECO:0007669"/>
    <property type="project" value="Ensembl"/>
</dbReference>
<dbReference type="GO" id="GO:0090091">
    <property type="term" value="P:positive regulation of extracellular matrix disassembly"/>
    <property type="evidence" value="ECO:0000315"/>
    <property type="project" value="UniProtKB"/>
</dbReference>
<dbReference type="GO" id="GO:0010763">
    <property type="term" value="P:positive regulation of fibroblast migration"/>
    <property type="evidence" value="ECO:0000315"/>
    <property type="project" value="UniProtKB"/>
</dbReference>
<dbReference type="GO" id="GO:0048146">
    <property type="term" value="P:positive regulation of fibroblast proliferation"/>
    <property type="evidence" value="ECO:0000315"/>
    <property type="project" value="UniProtKB"/>
</dbReference>
<dbReference type="GO" id="GO:1900087">
    <property type="term" value="P:positive regulation of G1/S transition of mitotic cell cycle"/>
    <property type="evidence" value="ECO:0007669"/>
    <property type="project" value="Ensembl"/>
</dbReference>
<dbReference type="GO" id="GO:2000491">
    <property type="term" value="P:positive regulation of hepatic stellate cell activation"/>
    <property type="evidence" value="ECO:0007669"/>
    <property type="project" value="Ensembl"/>
</dbReference>
<dbReference type="GO" id="GO:1904899">
    <property type="term" value="P:positive regulation of hepatic stellate cell proliferation"/>
    <property type="evidence" value="ECO:0007669"/>
    <property type="project" value="Ensembl"/>
</dbReference>
<dbReference type="GO" id="GO:0045669">
    <property type="term" value="P:positive regulation of osteoblast differentiation"/>
    <property type="evidence" value="ECO:0000250"/>
    <property type="project" value="UniProtKB"/>
</dbReference>
<dbReference type="GO" id="GO:0045860">
    <property type="term" value="P:positive regulation of protein kinase activity"/>
    <property type="evidence" value="ECO:0000250"/>
    <property type="project" value="UniProtKB"/>
</dbReference>
<dbReference type="GO" id="GO:1904754">
    <property type="term" value="P:positive regulation of vascular associated smooth muscle cell migration"/>
    <property type="evidence" value="ECO:0007669"/>
    <property type="project" value="Ensembl"/>
</dbReference>
<dbReference type="GO" id="GO:1904707">
    <property type="term" value="P:positive regulation of vascular associated smooth muscle cell proliferation"/>
    <property type="evidence" value="ECO:0007669"/>
    <property type="project" value="Ensembl"/>
</dbReference>
<dbReference type="GO" id="GO:0090303">
    <property type="term" value="P:positive regulation of wound healing"/>
    <property type="evidence" value="ECO:0007669"/>
    <property type="project" value="Ensembl"/>
</dbReference>
<dbReference type="GO" id="GO:0030500">
    <property type="term" value="P:regulation of bone mineralization"/>
    <property type="evidence" value="ECO:0000250"/>
    <property type="project" value="UniProtKB"/>
</dbReference>
<dbReference type="GO" id="GO:0034103">
    <property type="term" value="P:regulation of tissue remodeling"/>
    <property type="evidence" value="ECO:0007669"/>
    <property type="project" value="Ensembl"/>
</dbReference>
<dbReference type="GO" id="GO:0035994">
    <property type="term" value="P:response to muscle stretch"/>
    <property type="evidence" value="ECO:0007669"/>
    <property type="project" value="Ensembl"/>
</dbReference>
<dbReference type="CDD" id="cd00057">
    <property type="entry name" value="FA58C"/>
    <property type="match status" value="1"/>
</dbReference>
<dbReference type="FunFam" id="2.60.120.260:FF:000007">
    <property type="entry name" value="Discoidin domain receptor tyrosine kinase 1"/>
    <property type="match status" value="1"/>
</dbReference>
<dbReference type="FunFam" id="2.60.120.1190:FF:000001">
    <property type="entry name" value="Discoidin domain receptor tyrosine kinase 2"/>
    <property type="match status" value="1"/>
</dbReference>
<dbReference type="FunFam" id="1.10.510.10:FF:000053">
    <property type="entry name" value="Epithelial discoidin domain-containing receptor 1"/>
    <property type="match status" value="1"/>
</dbReference>
<dbReference type="FunFam" id="3.30.200.20:FF:000082">
    <property type="entry name" value="Epithelial discoidin domain-containing receptor 1"/>
    <property type="match status" value="1"/>
</dbReference>
<dbReference type="Gene3D" id="2.60.120.1190">
    <property type="match status" value="1"/>
</dbReference>
<dbReference type="Gene3D" id="2.60.120.260">
    <property type="entry name" value="Galactose-binding domain-like"/>
    <property type="match status" value="1"/>
</dbReference>
<dbReference type="Gene3D" id="3.30.200.20">
    <property type="entry name" value="Phosphorylase Kinase, domain 1"/>
    <property type="match status" value="1"/>
</dbReference>
<dbReference type="Gene3D" id="1.10.510.10">
    <property type="entry name" value="Transferase(Phosphotransferase) domain 1"/>
    <property type="match status" value="1"/>
</dbReference>
<dbReference type="InterPro" id="IPR048525">
    <property type="entry name" value="DDR1-2_DS-like"/>
</dbReference>
<dbReference type="InterPro" id="IPR000421">
    <property type="entry name" value="FA58C"/>
</dbReference>
<dbReference type="InterPro" id="IPR008979">
    <property type="entry name" value="Galactose-bd-like_sf"/>
</dbReference>
<dbReference type="InterPro" id="IPR011009">
    <property type="entry name" value="Kinase-like_dom_sf"/>
</dbReference>
<dbReference type="InterPro" id="IPR000719">
    <property type="entry name" value="Prot_kinase_dom"/>
</dbReference>
<dbReference type="InterPro" id="IPR050122">
    <property type="entry name" value="RTK"/>
</dbReference>
<dbReference type="InterPro" id="IPR001245">
    <property type="entry name" value="Ser-Thr/Tyr_kinase_cat_dom"/>
</dbReference>
<dbReference type="InterPro" id="IPR008266">
    <property type="entry name" value="Tyr_kinase_AS"/>
</dbReference>
<dbReference type="InterPro" id="IPR020635">
    <property type="entry name" value="Tyr_kinase_cat_dom"/>
</dbReference>
<dbReference type="InterPro" id="IPR002011">
    <property type="entry name" value="Tyr_kinase_rcpt_2_CS"/>
</dbReference>
<dbReference type="PANTHER" id="PTHR24416:SF295">
    <property type="entry name" value="DISCOIDIN DOMAIN-CONTAINING RECEPTOR 2"/>
    <property type="match status" value="1"/>
</dbReference>
<dbReference type="PANTHER" id="PTHR24416">
    <property type="entry name" value="TYROSINE-PROTEIN KINASE RECEPTOR"/>
    <property type="match status" value="1"/>
</dbReference>
<dbReference type="Pfam" id="PF21114">
    <property type="entry name" value="DDR1-2_DS-like"/>
    <property type="match status" value="1"/>
</dbReference>
<dbReference type="Pfam" id="PF00754">
    <property type="entry name" value="F5_F8_type_C"/>
    <property type="match status" value="1"/>
</dbReference>
<dbReference type="Pfam" id="PF07714">
    <property type="entry name" value="PK_Tyr_Ser-Thr"/>
    <property type="match status" value="1"/>
</dbReference>
<dbReference type="PRINTS" id="PR00109">
    <property type="entry name" value="TYRKINASE"/>
</dbReference>
<dbReference type="SMART" id="SM00231">
    <property type="entry name" value="FA58C"/>
    <property type="match status" value="1"/>
</dbReference>
<dbReference type="SMART" id="SM00219">
    <property type="entry name" value="TyrKc"/>
    <property type="match status" value="1"/>
</dbReference>
<dbReference type="SUPFAM" id="SSF49785">
    <property type="entry name" value="Galactose-binding domain-like"/>
    <property type="match status" value="1"/>
</dbReference>
<dbReference type="SUPFAM" id="SSF56112">
    <property type="entry name" value="Protein kinase-like (PK-like)"/>
    <property type="match status" value="1"/>
</dbReference>
<dbReference type="PROSITE" id="PS01285">
    <property type="entry name" value="FA58C_1"/>
    <property type="match status" value="1"/>
</dbReference>
<dbReference type="PROSITE" id="PS01286">
    <property type="entry name" value="FA58C_2"/>
    <property type="match status" value="1"/>
</dbReference>
<dbReference type="PROSITE" id="PS50022">
    <property type="entry name" value="FA58C_3"/>
    <property type="match status" value="1"/>
</dbReference>
<dbReference type="PROSITE" id="PS50011">
    <property type="entry name" value="PROTEIN_KINASE_DOM"/>
    <property type="match status" value="1"/>
</dbReference>
<dbReference type="PROSITE" id="PS00109">
    <property type="entry name" value="PROTEIN_KINASE_TYR"/>
    <property type="match status" value="1"/>
</dbReference>
<dbReference type="PROSITE" id="PS00239">
    <property type="entry name" value="RECEPTOR_TYR_KIN_II"/>
    <property type="match status" value="1"/>
</dbReference>
<comment type="function">
    <text evidence="8 9 10 11 13">Tyrosine kinase that functions as a cell surface receptor for fibrillar collagen and regulates cell differentiation, remodeling of the extracellular matrix, cell migration and cell proliferation. Required for normal bone development. Regulates osteoblast differentiation and chondrocyte maturation via a signaling pathway that involves MAP kinases and leads to the activation of the transcription factor RUNX2. Regulates remodeling of the extracellular matrix by up-regulation of the collagenases MMP1, MMP2 and MMP13, and thereby facilitates cell migration and tumor cell invasion. Promotes fibroblast migration and proliferation, and thereby contributes to cutaneous wound healing.</text>
</comment>
<comment type="catalytic activity">
    <reaction evidence="6">
        <text>L-tyrosyl-[protein] + ATP = O-phospho-L-tyrosyl-[protein] + ADP + H(+)</text>
        <dbReference type="Rhea" id="RHEA:10596"/>
        <dbReference type="Rhea" id="RHEA-COMP:10136"/>
        <dbReference type="Rhea" id="RHEA-COMP:20101"/>
        <dbReference type="ChEBI" id="CHEBI:15378"/>
        <dbReference type="ChEBI" id="CHEBI:30616"/>
        <dbReference type="ChEBI" id="CHEBI:46858"/>
        <dbReference type="ChEBI" id="CHEBI:61978"/>
        <dbReference type="ChEBI" id="CHEBI:456216"/>
        <dbReference type="EC" id="2.7.10.1"/>
    </reaction>
</comment>
<comment type="activity regulation">
    <text>Present in an inactive state in the absence of collagen binding and phosphorylation by SRC. Tyrosine phosphorylation enhances the affinity for ATP and the catalytic activity.</text>
</comment>
<comment type="subunit">
    <text evidence="10">Binds hydroxyproline-rich sequence motifs in fibrillar, glycosylated collagen, such as the GQOGVMGFO motif, where O stands for hydroxyproline. Interacts with SRC. Interacts (tyrosine phosphorylated) with SHC1.</text>
</comment>
<comment type="subcellular location">
    <subcellularLocation>
        <location>Cell membrane</location>
        <topology>Single-pass type I membrane protein</topology>
    </subcellularLocation>
</comment>
<comment type="tissue specificity">
    <text evidence="8 12 13">Widely expressed. Detected in lung, ovary, skin and in testis Leydig cells (at protein level). Widely expressed. Detected at high levels in heart, lung, skeletal muscle, central nervous system (CNS) and kidney, and at lower levels in brain and testis. Detected in chondrocytes in tibia growth plates of young mice.</text>
</comment>
<comment type="induction">
    <text>Up-regulated during osteoblast differentiation (in vitro). Up-regulated in cartilage from mice with osteoarthritis.</text>
</comment>
<comment type="PTM">
    <text evidence="1">N-glycosylated.</text>
</comment>
<comment type="PTM">
    <text evidence="1">Tyrosine phosphorylated in response to collagen binding. Phosphorylated by SRC; this is required for activation and subsequent autophosphorylation on additional tyrosine residues (By similarity).</text>
</comment>
<comment type="disease">
    <text>Defects in Ddr2 are the cause of the smallie (sli) phenotype. Smallie mice show distinct dwarfing, with reduced body mass and reduced bone mineral content. Mice also have mild craniofacial deformities, such as protuberant eyes and snub noses. Smallie mice have a reduced life span, with about half of them dying within 6 months. Matings between male and female smallie mice do not yield any offspring. The levels of circulating steroid hormones remain at a level corresponding to prepubertal wild-type mice. Adult testes exhibit much reduced numbers of spermatids with atrophy of spermatogonia, Sertoli and Leydig cells. Ovaries show an absence of corpora lutea.</text>
</comment>
<comment type="disruption phenotype">
    <text evidence="8">Mice are born at the expected Mendelian rate, but fail to thrive, resulting in much reduced adult body weight and dwarfing. They exhibit shortening of long bones, irregular growth of flat bones and a shortened snout. Young mice show shortened growth plates in long bones and impaired chondrocyte proliferation. Likewise, cultured fibroblasts from mutant mice show reduced proliferation.</text>
</comment>
<comment type="similarity">
    <text evidence="5">Belongs to the protein kinase superfamily. Tyr protein kinase family. Insulin receptor subfamily.</text>
</comment>
<comment type="caution">
    <text evidence="15 16">According to PubMed:18483174 Ddr2 is required for male and female fertility, since smallie mice with a 150 kb deletion that extends into the Ddr2 gene are sterile. Smallie males have defects in spermatogenesis (PubMed:19681157). On the other hand, the fertility status of mice with a targeted disruption of the Ddr2 gene has not been mentioned (PubMed:11375938). Thus, the infertility of smallie mice may be due to some additional, not yet identified defect.</text>
</comment>
<comment type="sequence caution" evidence="14">
    <conflict type="erroneous initiation">
        <sequence resource="EMBL-CDS" id="CAA54040"/>
    </conflict>
</comment>